<dbReference type="EC" id="1.6.5.9"/>
<dbReference type="EMBL" id="AC006234">
    <property type="protein sequence ID" value="AAD20915.1"/>
    <property type="molecule type" value="Genomic_DNA"/>
</dbReference>
<dbReference type="EMBL" id="CP002685">
    <property type="protein sequence ID" value="AEC07074.1"/>
    <property type="molecule type" value="Genomic_DNA"/>
</dbReference>
<dbReference type="EMBL" id="DQ446535">
    <property type="protein sequence ID" value="ABE65838.1"/>
    <property type="molecule type" value="mRNA"/>
</dbReference>
<dbReference type="PIR" id="E84593">
    <property type="entry name" value="E84593"/>
</dbReference>
<dbReference type="RefSeq" id="NP_179673.1">
    <property type="nucleotide sequence ID" value="NM_127645.4"/>
</dbReference>
<dbReference type="SMR" id="Q9SKT7"/>
<dbReference type="BioGRID" id="1962">
    <property type="interactions" value="2"/>
</dbReference>
<dbReference type="FunCoup" id="Q9SKT7">
    <property type="interactions" value="228"/>
</dbReference>
<dbReference type="IntAct" id="Q9SKT7">
    <property type="interactions" value="1"/>
</dbReference>
<dbReference type="STRING" id="3702.Q9SKT7"/>
<dbReference type="GlyGen" id="Q9SKT7">
    <property type="glycosylation" value="1 site"/>
</dbReference>
<dbReference type="SwissPalm" id="Q9SKT7"/>
<dbReference type="PaxDb" id="3702-AT2G20800.1"/>
<dbReference type="ProteomicsDB" id="251097"/>
<dbReference type="EnsemblPlants" id="AT2G20800.1">
    <property type="protein sequence ID" value="AT2G20800.1"/>
    <property type="gene ID" value="AT2G20800"/>
</dbReference>
<dbReference type="GeneID" id="816609"/>
<dbReference type="Gramene" id="AT2G20800.1">
    <property type="protein sequence ID" value="AT2G20800.1"/>
    <property type="gene ID" value="AT2G20800"/>
</dbReference>
<dbReference type="KEGG" id="ath:AT2G20800"/>
<dbReference type="Araport" id="AT2G20800"/>
<dbReference type="TAIR" id="AT2G20800">
    <property type="gene designation" value="NDB4"/>
</dbReference>
<dbReference type="eggNOG" id="KOG2495">
    <property type="taxonomic scope" value="Eukaryota"/>
</dbReference>
<dbReference type="HOGENOM" id="CLU_021377_1_0_1"/>
<dbReference type="InParanoid" id="Q9SKT7"/>
<dbReference type="OMA" id="MQQIGQG"/>
<dbReference type="PhylomeDB" id="Q9SKT7"/>
<dbReference type="BioCyc" id="ARA:AT2G20800-MONOMER"/>
<dbReference type="CD-CODE" id="4299E36E">
    <property type="entry name" value="Nucleolus"/>
</dbReference>
<dbReference type="PRO" id="PR:Q9SKT7"/>
<dbReference type="Proteomes" id="UP000006548">
    <property type="component" value="Chromosome 2"/>
</dbReference>
<dbReference type="ExpressionAtlas" id="Q9SKT7">
    <property type="expression patterns" value="baseline and differential"/>
</dbReference>
<dbReference type="GO" id="GO:0031314">
    <property type="term" value="C:extrinsic component of mitochondrial inner membrane"/>
    <property type="evidence" value="ECO:0000314"/>
    <property type="project" value="TAIR"/>
</dbReference>
<dbReference type="GO" id="GO:0005758">
    <property type="term" value="C:mitochondrial intermembrane space"/>
    <property type="evidence" value="ECO:0000250"/>
    <property type="project" value="UniProtKB"/>
</dbReference>
<dbReference type="GO" id="GO:0005739">
    <property type="term" value="C:mitochondrion"/>
    <property type="evidence" value="ECO:0000314"/>
    <property type="project" value="UniProtKB"/>
</dbReference>
<dbReference type="GO" id="GO:0005777">
    <property type="term" value="C:peroxisome"/>
    <property type="evidence" value="ECO:0007669"/>
    <property type="project" value="UniProtKB-SubCell"/>
</dbReference>
<dbReference type="GO" id="GO:0005509">
    <property type="term" value="F:calcium ion binding"/>
    <property type="evidence" value="ECO:0007669"/>
    <property type="project" value="InterPro"/>
</dbReference>
<dbReference type="GO" id="GO:0050136">
    <property type="term" value="F:NADH:ubiquinone reductase (non-electrogenic) activity"/>
    <property type="evidence" value="ECO:0007669"/>
    <property type="project" value="UniProtKB-EC"/>
</dbReference>
<dbReference type="GO" id="GO:0016491">
    <property type="term" value="F:oxidoreductase activity"/>
    <property type="evidence" value="ECO:0000250"/>
    <property type="project" value="UniProtKB"/>
</dbReference>
<dbReference type="FunFam" id="3.50.50.100:FF:000002">
    <property type="entry name" value="External alternative NAD(P)H-ubiquinone oxidoreductase B1, mitochondrial"/>
    <property type="match status" value="1"/>
</dbReference>
<dbReference type="FunFam" id="3.50.50.100:FF:000008">
    <property type="entry name" value="External alternative NAD(P)H-ubiquinone oxidoreductase B1, mitochondrial"/>
    <property type="match status" value="1"/>
</dbReference>
<dbReference type="Gene3D" id="3.50.50.100">
    <property type="match status" value="2"/>
</dbReference>
<dbReference type="InterPro" id="IPR011992">
    <property type="entry name" value="EF-hand-dom_pair"/>
</dbReference>
<dbReference type="InterPro" id="IPR002048">
    <property type="entry name" value="EF_hand_dom"/>
</dbReference>
<dbReference type="InterPro" id="IPR036188">
    <property type="entry name" value="FAD/NAD-bd_sf"/>
</dbReference>
<dbReference type="InterPro" id="IPR023753">
    <property type="entry name" value="FAD/NAD-binding_dom"/>
</dbReference>
<dbReference type="InterPro" id="IPR045024">
    <property type="entry name" value="NDH-2"/>
</dbReference>
<dbReference type="InterPro" id="IPR054585">
    <property type="entry name" value="NDH2-like_C"/>
</dbReference>
<dbReference type="PANTHER" id="PTHR43706:SF25">
    <property type="entry name" value="EXTERNAL ALTERNATIVE NAD(P)H-UBIQUINONE OXIDOREDUCTASE B4, MITOCHONDRIAL"/>
    <property type="match status" value="1"/>
</dbReference>
<dbReference type="PANTHER" id="PTHR43706">
    <property type="entry name" value="NADH DEHYDROGENASE"/>
    <property type="match status" value="1"/>
</dbReference>
<dbReference type="Pfam" id="PF22366">
    <property type="entry name" value="NDH2_C"/>
    <property type="match status" value="1"/>
</dbReference>
<dbReference type="Pfam" id="PF07992">
    <property type="entry name" value="Pyr_redox_2"/>
    <property type="match status" value="1"/>
</dbReference>
<dbReference type="PRINTS" id="PR00368">
    <property type="entry name" value="FADPNR"/>
</dbReference>
<dbReference type="PRINTS" id="PR00469">
    <property type="entry name" value="PNDRDTASEII"/>
</dbReference>
<dbReference type="SUPFAM" id="SSF47473">
    <property type="entry name" value="EF-hand"/>
    <property type="match status" value="1"/>
</dbReference>
<dbReference type="SUPFAM" id="SSF51905">
    <property type="entry name" value="FAD/NAD(P)-binding domain"/>
    <property type="match status" value="2"/>
</dbReference>
<dbReference type="PROSITE" id="PS50222">
    <property type="entry name" value="EF_HAND_2"/>
    <property type="match status" value="1"/>
</dbReference>
<protein>
    <recommendedName>
        <fullName>External alternative NAD(P)H-ubiquinone oxidoreductase B4, mitochondrial</fullName>
        <ecNumber>1.6.5.9</ecNumber>
    </recommendedName>
    <alternativeName>
        <fullName>External alternative NADH dehydrogenase NDB4</fullName>
    </alternativeName>
    <alternativeName>
        <fullName>NADH:ubiquinone reductase (non-electrogenic) NDB4</fullName>
    </alternativeName>
</protein>
<name>NDB4_ARATH</name>
<comment type="function">
    <text evidence="1 7 8">Alternative NADH-ubiquinone oxidoreductase which catalyzes the oxidation of mitochondrial NADH does not translocate protons across the inner mitochondrial membrane (By similarity). NAD(P)H dehydrogenase; more efficient on NADH.</text>
</comment>
<comment type="catalytic activity">
    <reaction>
        <text>a quinone + NADH + H(+) = a quinol + NAD(+)</text>
        <dbReference type="Rhea" id="RHEA:46160"/>
        <dbReference type="ChEBI" id="CHEBI:15378"/>
        <dbReference type="ChEBI" id="CHEBI:24646"/>
        <dbReference type="ChEBI" id="CHEBI:57540"/>
        <dbReference type="ChEBI" id="CHEBI:57945"/>
        <dbReference type="ChEBI" id="CHEBI:132124"/>
        <dbReference type="EC" id="1.6.5.9"/>
    </reaction>
</comment>
<comment type="catalytic activity">
    <reaction>
        <text>a ubiquinone + NADH + H(+) = a ubiquinol + NAD(+)</text>
        <dbReference type="Rhea" id="RHEA:23152"/>
        <dbReference type="Rhea" id="RHEA-COMP:9565"/>
        <dbReference type="Rhea" id="RHEA-COMP:9566"/>
        <dbReference type="ChEBI" id="CHEBI:15378"/>
        <dbReference type="ChEBI" id="CHEBI:16389"/>
        <dbReference type="ChEBI" id="CHEBI:17976"/>
        <dbReference type="ChEBI" id="CHEBI:57540"/>
        <dbReference type="ChEBI" id="CHEBI:57945"/>
    </reaction>
</comment>
<comment type="cofactor">
    <cofactor evidence="1">
        <name>FAD</name>
        <dbReference type="ChEBI" id="CHEBI:57692"/>
    </cofactor>
    <text evidence="1">Binds 1 FAD per subunit.</text>
</comment>
<comment type="activity regulation">
    <text evidence="7">No effect of calcium ions on activity.</text>
</comment>
<comment type="biophysicochemical properties">
    <phDependence>
        <text evidence="7">Optimum pH is 6.8 with NADPH as substrate and 6.8-7.8 with NADH as substrate.</text>
    </phDependence>
</comment>
<comment type="subcellular location">
    <subcellularLocation>
        <location>Mitochondrion inner membrane</location>
        <topology>Peripheral membrane protein</topology>
        <orientation evidence="9">Intermembrane side</orientation>
    </subcellularLocation>
    <subcellularLocation>
        <location evidence="1">Peroxisome</location>
    </subcellularLocation>
</comment>
<comment type="tissue specificity">
    <text evidence="4 6">Expressed in seedlings, roots, cotyledons, stems, buds and flowers and, to a lower extent, in stems and leaves.</text>
</comment>
<comment type="induction">
    <text evidence="5">Induced by chloramphenicol (Chl), erythromycin (Ery), paraquat (Par), rotenone (Rot) and salicylic acid (SA).</text>
</comment>
<comment type="disruption phenotype">
    <text evidence="8">Lower reactive oxygen species formation and altered phenotype (e.g. growth rate, root:shoot ratios and leaf area). Lower leaf area early in development followed by a prompt subsequent increase in leaf area leading to larger leaves in mature plants. Better tolerance to salinity stress. These phenotypes are probably due to an enhanced expression of NDB2 and AOX.</text>
</comment>
<comment type="similarity">
    <text evidence="10">Belongs to the NADH dehydrogenase family.</text>
</comment>
<accession>Q9SKT7</accession>
<organism>
    <name type="scientific">Arabidopsis thaliana</name>
    <name type="common">Mouse-ear cress</name>
    <dbReference type="NCBI Taxonomy" id="3702"/>
    <lineage>
        <taxon>Eukaryota</taxon>
        <taxon>Viridiplantae</taxon>
        <taxon>Streptophyta</taxon>
        <taxon>Embryophyta</taxon>
        <taxon>Tracheophyta</taxon>
        <taxon>Spermatophyta</taxon>
        <taxon>Magnoliopsida</taxon>
        <taxon>eudicotyledons</taxon>
        <taxon>Gunneridae</taxon>
        <taxon>Pentapetalae</taxon>
        <taxon>rosids</taxon>
        <taxon>malvids</taxon>
        <taxon>Brassicales</taxon>
        <taxon>Brassicaceae</taxon>
        <taxon>Camelineae</taxon>
        <taxon>Arabidopsis</taxon>
    </lineage>
</organism>
<evidence type="ECO:0000250" key="1"/>
<evidence type="ECO:0000255" key="2"/>
<evidence type="ECO:0000255" key="3">
    <source>
        <dbReference type="PROSITE-ProRule" id="PRU00448"/>
    </source>
</evidence>
<evidence type="ECO:0000269" key="4">
    <source>
    </source>
</evidence>
<evidence type="ECO:0000269" key="5">
    <source>
    </source>
</evidence>
<evidence type="ECO:0000269" key="6">
    <source>
    </source>
</evidence>
<evidence type="ECO:0000269" key="7">
    <source>
    </source>
</evidence>
<evidence type="ECO:0000269" key="8">
    <source>
    </source>
</evidence>
<evidence type="ECO:0000269" key="9">
    <source>
    </source>
</evidence>
<evidence type="ECO:0000305" key="10"/>
<feature type="transit peptide" description="Mitochondrion" evidence="2">
    <location>
        <begin position="1"/>
        <end position="39"/>
    </location>
</feature>
<feature type="chain" id="PRO_0000419508" description="External alternative NAD(P)H-ubiquinone oxidoreductase B4, mitochondrial">
    <location>
        <begin position="40"/>
        <end position="582"/>
    </location>
</feature>
<feature type="domain" description="EF-hand" evidence="3">
    <location>
        <begin position="384"/>
        <end position="419"/>
    </location>
</feature>
<feature type="short sequence motif" description="Microbody targeting signal" evidence="1">
    <location>
        <begin position="573"/>
        <end position="582"/>
    </location>
</feature>
<feature type="binding site" evidence="1">
    <location>
        <begin position="65"/>
        <end position="95"/>
    </location>
    <ligand>
        <name>FAD</name>
        <dbReference type="ChEBI" id="CHEBI:57692"/>
    </ligand>
</feature>
<feature type="binding site" evidence="1">
    <location>
        <begin position="227"/>
        <end position="263"/>
    </location>
    <ligand>
        <name>NAD(+)</name>
        <dbReference type="ChEBI" id="CHEBI:57540"/>
    </ligand>
</feature>
<feature type="binding site" evidence="10">
    <location>
        <position position="397"/>
    </location>
    <ligand>
        <name>Ca(2+)</name>
        <dbReference type="ChEBI" id="CHEBI:29108"/>
    </ligand>
</feature>
<feature type="binding site" evidence="10">
    <location>
        <position position="401"/>
    </location>
    <ligand>
        <name>Ca(2+)</name>
        <dbReference type="ChEBI" id="CHEBI:29108"/>
    </ligand>
</feature>
<feature type="binding site" evidence="10">
    <location>
        <position position="403"/>
    </location>
    <ligand>
        <name>Ca(2+)</name>
        <dbReference type="ChEBI" id="CHEBI:29108"/>
    </ligand>
</feature>
<feature type="binding site" evidence="10">
    <location>
        <position position="408"/>
    </location>
    <ligand>
        <name>Ca(2+)</name>
        <dbReference type="ChEBI" id="CHEBI:29108"/>
    </ligand>
</feature>
<gene>
    <name type="primary">NDB4</name>
    <name type="ordered locus">At2g20800</name>
    <name type="ORF">F5H14</name>
</gene>
<sequence length="582" mass="65372">MSFHSFYQRASSLFKAYPSTSKILLLSTFSGGGGVLVYSDSNPLKRILHADATLDSDGNPIRKKKVVVLGSGWSGYSFLSYLNNPNYDVQVVSPRNFFLFTPLLPSVTNGTVEARSIVEPIRGLMRKKGFEYKEAECVKIDASNKKIHCRSKEGSSLKGTTEFDMDYDILILAVGAKPNTFNTPGVEEHAYFLKEAEDALNIRHSVIDCFERASLPNLTEEERKKILHFVVVGGGPTGVEFSAELHDFLVQDVAKIYPKVQEFTKITLLEAGDHILNMFDKRITAFAEEKFQRDGIDLKTGSMVVGVTADEISTKERETGKIVSEPYGMVVWSTGIGSRPVIKDFMQQIGQGQRRVLATDEWLRVEGCDGVYALGDTATINQRRVMEDIAAIFNKADKGNTGTLKKKDFNSVVKDICQRYPQVELYLKKNKLKNIANLLKSANGEDTQVNIEKFKQALSEVDSQMKNLPATAQVASQQGKYLAKCFNKMEKCEKKPEGPLRFRGEGRHRFQPFRYRHFGSFAPLGGEQTAAELPGDWVSIGHSSQWLWYSVYASKLVSWRTRMLVISDWTRRFVFGRDSSSI</sequence>
<keyword id="KW-0106">Calcium</keyword>
<keyword id="KW-0274">FAD</keyword>
<keyword id="KW-0285">Flavoprotein</keyword>
<keyword id="KW-0472">Membrane</keyword>
<keyword id="KW-0479">Metal-binding</keyword>
<keyword id="KW-0496">Mitochondrion</keyword>
<keyword id="KW-0999">Mitochondrion inner membrane</keyword>
<keyword id="KW-0520">NAD</keyword>
<keyword id="KW-0521">NADP</keyword>
<keyword id="KW-0560">Oxidoreductase</keyword>
<keyword id="KW-0576">Peroxisome</keyword>
<keyword id="KW-1185">Reference proteome</keyword>
<keyword id="KW-0809">Transit peptide</keyword>
<keyword id="KW-0830">Ubiquinone</keyword>
<reference key="1">
    <citation type="journal article" date="1999" name="Nature">
        <title>Sequence and analysis of chromosome 2 of the plant Arabidopsis thaliana.</title>
        <authorList>
            <person name="Lin X."/>
            <person name="Kaul S."/>
            <person name="Rounsley S.D."/>
            <person name="Shea T.P."/>
            <person name="Benito M.-I."/>
            <person name="Town C.D."/>
            <person name="Fujii C.Y."/>
            <person name="Mason T.M."/>
            <person name="Bowman C.L."/>
            <person name="Barnstead M.E."/>
            <person name="Feldblyum T.V."/>
            <person name="Buell C.R."/>
            <person name="Ketchum K.A."/>
            <person name="Lee J.J."/>
            <person name="Ronning C.M."/>
            <person name="Koo H.L."/>
            <person name="Moffat K.S."/>
            <person name="Cronin L.A."/>
            <person name="Shen M."/>
            <person name="Pai G."/>
            <person name="Van Aken S."/>
            <person name="Umayam L."/>
            <person name="Tallon L.J."/>
            <person name="Gill J.E."/>
            <person name="Adams M.D."/>
            <person name="Carrera A.J."/>
            <person name="Creasy T.H."/>
            <person name="Goodman H.M."/>
            <person name="Somerville C.R."/>
            <person name="Copenhaver G.P."/>
            <person name="Preuss D."/>
            <person name="Nierman W.C."/>
            <person name="White O."/>
            <person name="Eisen J.A."/>
            <person name="Salzberg S.L."/>
            <person name="Fraser C.M."/>
            <person name="Venter J.C."/>
        </authorList>
    </citation>
    <scope>NUCLEOTIDE SEQUENCE [LARGE SCALE GENOMIC DNA]</scope>
    <source>
        <strain>cv. Columbia</strain>
    </source>
</reference>
<reference key="2">
    <citation type="journal article" date="2017" name="Plant J.">
        <title>Araport11: a complete reannotation of the Arabidopsis thaliana reference genome.</title>
        <authorList>
            <person name="Cheng C.Y."/>
            <person name="Krishnakumar V."/>
            <person name="Chan A.P."/>
            <person name="Thibaud-Nissen F."/>
            <person name="Schobel S."/>
            <person name="Town C.D."/>
        </authorList>
    </citation>
    <scope>GENOME REANNOTATION</scope>
    <source>
        <strain>cv. Columbia</strain>
    </source>
</reference>
<reference key="3">
    <citation type="journal article" date="2006" name="Plant Biotechnol. J.">
        <title>Simultaneous high-throughput recombinational cloning of open reading frames in closed and open configurations.</title>
        <authorList>
            <person name="Underwood B.A."/>
            <person name="Vanderhaeghen R."/>
            <person name="Whitford R."/>
            <person name="Town C.D."/>
            <person name="Hilson P."/>
        </authorList>
    </citation>
    <scope>NUCLEOTIDE SEQUENCE [LARGE SCALE MRNA]</scope>
    <source>
        <strain>cv. Columbia</strain>
    </source>
</reference>
<reference key="4">
    <citation type="journal article" date="2003" name="Plant Physiol.">
        <title>Arabidopsis genes encoding mitochondrial type II NAD(P)H dehydrogenases have different evolutionary origin and show distinct responses to light.</title>
        <authorList>
            <person name="Michalecka A.M."/>
            <person name="Svensson A.S."/>
            <person name="Johansson F.I."/>
            <person name="Agius S.C."/>
            <person name="Johanson U."/>
            <person name="Brennicke A."/>
            <person name="Binder S."/>
            <person name="Rasmusson A.G."/>
        </authorList>
    </citation>
    <scope>SUBCELLULAR LOCATION</scope>
    <scope>TISSUE SPECIFICITY</scope>
</reference>
<reference key="5">
    <citation type="journal article" date="2004" name="Annu. Rev. Plant Biol.">
        <title>Alternative NAD(P)H dehydrogenases of plant mitochondria.</title>
        <authorList>
            <person name="Rasmusson A.G."/>
            <person name="Soole K.L."/>
            <person name="Elthon T.E."/>
        </authorList>
    </citation>
    <scope>REVIEW</scope>
</reference>
<reference key="6">
    <citation type="journal article" date="2004" name="Plant Cell">
        <title>Experimental analysis of the Arabidopsis mitochondrial proteome highlights signaling and regulatory components, provides assessment of targeting prediction programs, and indicates plant-specific mitochondrial proteins.</title>
        <authorList>
            <person name="Heazlewood J.L."/>
            <person name="Tonti-Filippini J.S."/>
            <person name="Gout A.M."/>
            <person name="Day D.A."/>
            <person name="Whelan J."/>
            <person name="Millar A.H."/>
        </authorList>
    </citation>
    <scope>IDENTIFICATION BY MASS SPECTROMETRY</scope>
    <scope>SUBCELLULAR LOCATION [LARGE SCALE ANALYSIS]</scope>
    <source>
        <strain>cv. Landsberg erecta</strain>
    </source>
</reference>
<reference key="7">
    <citation type="journal article" date="2005" name="Plant Mol. Biol.">
        <title>Stress-induced co-expression of alternative respiratory chain components in Arabidopsis thaliana.</title>
        <authorList>
            <person name="Clifton R."/>
            <person name="Lister R."/>
            <person name="Parker K.L."/>
            <person name="Sappl P.G."/>
            <person name="Elhafez D."/>
            <person name="Millar A.H."/>
            <person name="Day D.A."/>
            <person name="Whelan J."/>
        </authorList>
    </citation>
    <scope>INDUCTION BY ABIOTIC STRESSES</scope>
</reference>
<reference key="8">
    <citation type="journal article" date="2006" name="Plant Cell Physiol.">
        <title>Characterization of mitochondrial alternative NAD(P)H dehydrogenases in Arabidopsis: intraorganelle location and expression.</title>
        <authorList>
            <person name="Elhafez D."/>
            <person name="Murcha M.W."/>
            <person name="Clifton R."/>
            <person name="Soole K.L."/>
            <person name="Day D.A."/>
            <person name="Whelan J."/>
        </authorList>
    </citation>
    <scope>SUBCELLULAR LOCATION</scope>
    <scope>TISSUE SPECIFICITY</scope>
    <source>
        <strain>cv. Columbia</strain>
    </source>
</reference>
<reference key="9">
    <citation type="journal article" date="2007" name="J. Biol. Chem.">
        <title>Ca2+-binding and Ca2+-independent respiratory NADH and NADPH dehydrogenases of Arabidopsis thaliana.</title>
        <authorList>
            <person name="Geisler D.A."/>
            <person name="Broselid C."/>
            <person name="Hederstedt L."/>
            <person name="Rasmusson A.G."/>
        </authorList>
    </citation>
    <scope>FUNCTION</scope>
    <scope>ACTIVITY REGULATION</scope>
    <scope>BIOPHYSICOCHEMICAL PROPERTIES</scope>
</reference>
<reference key="10">
    <citation type="journal article" date="2011" name="Plant Cell Physiol.">
        <title>Alterations in the mitochondrial alternative NAD(P)H Dehydrogenase NDB4 lead to changes in mitochondrial electron transport chain composition, plant growth and response to oxidative stress.</title>
        <authorList>
            <person name="Smith C."/>
            <person name="Barthet M."/>
            <person name="Melino V."/>
            <person name="Smith P."/>
            <person name="Day D."/>
            <person name="Soole K."/>
        </authorList>
    </citation>
    <scope>FUNCTION</scope>
    <scope>DISRUPTION PHENOTYPE</scope>
</reference>
<reference key="11">
    <citation type="journal article" date="2011" name="Plant Physiol.">
        <title>Defining the protein complex proteome of plant mitochondria.</title>
        <authorList>
            <person name="Klodmann J."/>
            <person name="Senkler M."/>
            <person name="Rode C."/>
            <person name="Braun H.-P."/>
        </authorList>
    </citation>
    <scope>IDENTIFICATION BY MASS SPECTROMETRY</scope>
    <scope>SUBCELLULAR LOCATION [LARGE SCALE ANALYSIS]</scope>
</reference>
<proteinExistence type="evidence at protein level"/>